<comment type="function">
    <text>These proteins are essential for the biogenesis of mature CS3 pili, but not for synthesis of the CS3 pilin subunit.</text>
</comment>
<comment type="subcellular location">
    <subcellularLocation>
        <location evidence="1">Cell outer membrane</location>
        <topology evidence="1">Multi-pass membrane protein</topology>
    </subcellularLocation>
</comment>
<comment type="alternative products">
    <event type="alternative initiation"/>
    <isoform>
        <id>P15484-1</id>
        <name>104 kDa</name>
        <sequence type="displayed"/>
    </isoform>
    <isoform>
        <id>P15484-2</id>
        <name>63 kDa</name>
        <sequence type="described" ref="VSP_018728"/>
    </isoform>
    <isoform>
        <id>P15484-3</id>
        <name>48 kDa</name>
        <sequence type="described" ref="VSP_018729"/>
    </isoform>
    <isoform>
        <id>P15484-4</id>
        <name>33 kDa</name>
        <sequence type="described" ref="VSP_018730"/>
    </isoform>
    <isoform>
        <id>P15484-5</id>
        <name>20 kDa</name>
        <sequence type="described" ref="VSP_018731"/>
    </isoform>
</comment>
<comment type="PTM">
    <text>A 97 kDa form of the protein is thought to be due to post-translational processing of isoform 104 kDa.</text>
</comment>
<comment type="miscellaneous">
    <text>Suppression of amber codon 754 seems to be amino acid specific; a supE suppressor (usually Gln) permits function, whereas a supF suppressor (Tyr) does not.</text>
</comment>
<comment type="miscellaneous">
    <molecule>Isoform 104 kDa</molecule>
    <text>Requires the suppression or readthrough of an internal amber codon in position 754.</text>
</comment>
<comment type="similarity">
    <text evidence="2">Belongs to the fimbrial export usher family.</text>
</comment>
<protein>
    <recommendedName>
        <fullName>Outer membrane usher protein CS3-2</fullName>
    </recommendedName>
    <alternativeName>
        <fullName>CS3 pili synthesis 104 kDa protein</fullName>
    </alternativeName>
</protein>
<organism>
    <name type="scientific">Escherichia coli</name>
    <dbReference type="NCBI Taxonomy" id="562"/>
    <lineage>
        <taxon>Bacteria</taxon>
        <taxon>Pseudomonadati</taxon>
        <taxon>Pseudomonadota</taxon>
        <taxon>Gammaproteobacteria</taxon>
        <taxon>Enterobacterales</taxon>
        <taxon>Enterobacteriaceae</taxon>
        <taxon>Escherichia</taxon>
    </lineage>
</organism>
<feature type="chain" id="PRO_0000009301" description="Outer membrane usher protein CS3-2">
    <location>
        <begin position="1"/>
        <end position="937"/>
    </location>
</feature>
<feature type="splice variant" id="VSP_018731" description="In isoform 20 kDa." evidence="2">
    <location>
        <begin position="1"/>
        <end position="571"/>
    </location>
</feature>
<feature type="splice variant" id="VSP_018730" description="In isoform 33 kDa." evidence="2">
    <location>
        <begin position="1"/>
        <end position="450"/>
    </location>
</feature>
<feature type="splice variant" id="VSP_018729" description="In isoform 48 kDa." evidence="2">
    <location>
        <begin position="1"/>
        <end position="316"/>
    </location>
</feature>
<feature type="splice variant" id="VSP_018728" description="In isoform 63 kDa." evidence="2">
    <location>
        <begin position="1"/>
        <end position="180"/>
    </location>
</feature>
<evidence type="ECO:0000250" key="1"/>
<evidence type="ECO:0000305" key="2"/>
<reference key="1">
    <citation type="journal article" date="1989" name="Mol. Microbiol.">
        <title>Genes for biosynthesis and assembly of CS3 pili of CFA/II enterotoxigenic Escherichia coli: novel regulation of pilus production by bypassing an amber codon.</title>
        <authorList>
            <person name="Jalajakumari M.B."/>
            <person name="Thomas C.J."/>
            <person name="Halter R."/>
            <person name="Manning P.A."/>
        </authorList>
    </citation>
    <scope>NUCLEOTIDE SEQUENCE [GENOMIC DNA]</scope>
    <source>
        <strain>PB176 / ETEC</strain>
    </source>
</reference>
<keyword id="KW-0024">Alternative initiation</keyword>
<keyword id="KW-0998">Cell outer membrane</keyword>
<keyword id="KW-1029">Fimbrium biogenesis</keyword>
<keyword id="KW-0472">Membrane</keyword>
<keyword id="KW-1159">RNA suppression of termination</keyword>
<keyword id="KW-0812">Transmembrane</keyword>
<keyword id="KW-1134">Transmembrane beta strand</keyword>
<keyword id="KW-0813">Transport</keyword>
<dbReference type="EMBL" id="X16944">
    <property type="protein sequence ID" value="CAA34816.1"/>
    <property type="status" value="ALT_SEQ"/>
    <property type="molecule type" value="Genomic_DNA"/>
</dbReference>
<dbReference type="EMBL" id="X16944">
    <property type="protein sequence ID" value="CAA34817.1"/>
    <property type="molecule type" value="Genomic_DNA"/>
</dbReference>
<dbReference type="EMBL" id="X16944">
    <property type="protein sequence ID" value="CAA34818.1"/>
    <property type="molecule type" value="Genomic_DNA"/>
</dbReference>
<dbReference type="EMBL" id="X16944">
    <property type="protein sequence ID" value="CAA34819.1"/>
    <property type="molecule type" value="Genomic_DNA"/>
</dbReference>
<dbReference type="PIR" id="S78561">
    <property type="entry name" value="S78561"/>
</dbReference>
<dbReference type="GO" id="GO:0009279">
    <property type="term" value="C:cell outer membrane"/>
    <property type="evidence" value="ECO:0007669"/>
    <property type="project" value="UniProtKB-SubCell"/>
</dbReference>
<dbReference type="GO" id="GO:0015473">
    <property type="term" value="F:fimbrial usher porin activity"/>
    <property type="evidence" value="ECO:0007669"/>
    <property type="project" value="InterPro"/>
</dbReference>
<dbReference type="GO" id="GO:0009297">
    <property type="term" value="P:pilus assembly"/>
    <property type="evidence" value="ECO:0007669"/>
    <property type="project" value="InterPro"/>
</dbReference>
<dbReference type="Gene3D" id="2.60.40.2070">
    <property type="match status" value="1"/>
</dbReference>
<dbReference type="Gene3D" id="2.60.40.3110">
    <property type="match status" value="1"/>
</dbReference>
<dbReference type="Gene3D" id="2.60.40.2610">
    <property type="entry name" value="Outer membrane usher protein FimD, plug domain"/>
    <property type="match status" value="1"/>
</dbReference>
<dbReference type="InterPro" id="IPR000015">
    <property type="entry name" value="Fimb_usher"/>
</dbReference>
<dbReference type="InterPro" id="IPR018030">
    <property type="entry name" value="Fimbrial_membr_usher_CS"/>
</dbReference>
<dbReference type="InterPro" id="IPR042186">
    <property type="entry name" value="FimD_plug_dom"/>
</dbReference>
<dbReference type="InterPro" id="IPR025949">
    <property type="entry name" value="PapC-like_C"/>
</dbReference>
<dbReference type="InterPro" id="IPR043142">
    <property type="entry name" value="PapC-like_C_sf"/>
</dbReference>
<dbReference type="InterPro" id="IPR025885">
    <property type="entry name" value="PapC_N"/>
</dbReference>
<dbReference type="PANTHER" id="PTHR30451:SF9">
    <property type="entry name" value="F1 CAPSULE-ANCHORING PROTEIN"/>
    <property type="match status" value="1"/>
</dbReference>
<dbReference type="PANTHER" id="PTHR30451">
    <property type="entry name" value="OUTER MEMBRANE USHER PROTEIN"/>
    <property type="match status" value="1"/>
</dbReference>
<dbReference type="Pfam" id="PF13953">
    <property type="entry name" value="PapC_C"/>
    <property type="match status" value="1"/>
</dbReference>
<dbReference type="Pfam" id="PF13954">
    <property type="entry name" value="PapC_N"/>
    <property type="match status" value="1"/>
</dbReference>
<dbReference type="Pfam" id="PF00577">
    <property type="entry name" value="Usher"/>
    <property type="match status" value="1"/>
</dbReference>
<dbReference type="PROSITE" id="PS01151">
    <property type="entry name" value="FIMBRIAL_USHER"/>
    <property type="match status" value="1"/>
</dbReference>
<name>CS32_ECOLX</name>
<sequence length="937" mass="104152">MYFDAGESEDFCIQYSVLQDIGVTVSGNQDECANLDDELNLRTRFDFYSKRMDIFVSPKFVPRKKNGLAPIKLWDEGENALFTSYNFSEDYYHFKGDARDSYSQYANIQPRLNIGPWRIRTQAIWNKNNNTKGEWSNNYLYAERGLGNIKSRLYIGDGYFPLKNFNSFKFKGGVLKTDENMYPYSEKTYSPIVKGSAKTQAKVEFFQDGVKIYSSIVPPGDFSISDYILSGSNSDLYVKVIEENGSIQEFIVPFTYPAVAVREGFTYYEIAMGETQQSNDYFTQLSFTRGLPYDFTVLTSLEYSGFYRSLEIGLGKMLGNLGALSLIYGQSNFSKSDNSKNKKWDIRYNKNIPDLNTYLSFSAVSQTRGGYSSLRDALDYEIGEYTFNSKNSYTASINHSLGELGSLNFSGTWRNYWENKNQTRSYNLSYSTQIFNGKAYLSGSLIRSELMNFNNKISDTILNIGVNIPFGLSRGIQSVSYNTSSVKGGRSTHQLGISGSEFDNKLYWHVNQGYSDNYSNTSMYGYYKAKYAQVNAGYSVSERYNHAYGGIEGGILVYDGGIILGRNLGDTMSIIEAPGAENTKIRGWGSIETDWRGRAFIGYLSPYQNNDISLDPSSLPLDSSLDITTNSVIPTTGAIVKTTYNVKKGKKVMLTLKKSNGDAVPFGAIVTVMDGDQNTSIVGDNGQLYLGSSMDTGRLKVIWGNGEDKKCVVDYIVGDNKNIAGIYIGSAEHVFSSMLLYGKKISFLSASVWXVIGVVKAFLTTLQSNNEWRTHSEKNDFSIDFDVGVGRSFAAVGPTKDMSLGANLTSEPTLAIDFTPIENIYVGANYGKDIGTLVFTTNDLTDITLMSSRSVVDGRQTGFFTFMDSSATYKISTKLGSSNDVNIQEITQGAKITPVSGEKTLPKKFTLKLHAHRSSSTVPDTYTVGLNVTSNVI</sequence>
<proteinExistence type="inferred from homology"/>
<accession>P15484</accession>
<accession>P15485</accession>
<accession>P15486</accession>
<accession>P15487</accession>
<accession>P97157</accession>
<accession>P97158</accession>